<evidence type="ECO:0000250" key="1"/>
<evidence type="ECO:0000250" key="2">
    <source>
        <dbReference type="UniProtKB" id="P19793"/>
    </source>
</evidence>
<evidence type="ECO:0000250" key="3">
    <source>
        <dbReference type="UniProtKB" id="P48443"/>
    </source>
</evidence>
<evidence type="ECO:0000255" key="4">
    <source>
        <dbReference type="PROSITE-ProRule" id="PRU00407"/>
    </source>
</evidence>
<evidence type="ECO:0000255" key="5">
    <source>
        <dbReference type="PROSITE-ProRule" id="PRU01189"/>
    </source>
</evidence>
<evidence type="ECO:0000256" key="6">
    <source>
        <dbReference type="SAM" id="MobiDB-lite"/>
    </source>
</evidence>
<evidence type="ECO:0000269" key="7">
    <source>
    </source>
</evidence>
<evidence type="ECO:0000269" key="8">
    <source>
    </source>
</evidence>
<evidence type="ECO:0000305" key="9"/>
<organism>
    <name type="scientific">Rattus norvegicus</name>
    <name type="common">Rat</name>
    <dbReference type="NCBI Taxonomy" id="10116"/>
    <lineage>
        <taxon>Eukaryota</taxon>
        <taxon>Metazoa</taxon>
        <taxon>Chordata</taxon>
        <taxon>Craniata</taxon>
        <taxon>Vertebrata</taxon>
        <taxon>Euteleostomi</taxon>
        <taxon>Mammalia</taxon>
        <taxon>Eutheria</taxon>
        <taxon>Euarchontoglires</taxon>
        <taxon>Glires</taxon>
        <taxon>Rodentia</taxon>
        <taxon>Myomorpha</taxon>
        <taxon>Muroidea</taxon>
        <taxon>Muridae</taxon>
        <taxon>Murinae</taxon>
        <taxon>Rattus</taxon>
    </lineage>
</organism>
<accession>Q5BJR8</accession>
<keyword id="KW-0963">Cytoplasm</keyword>
<keyword id="KW-0238">DNA-binding</keyword>
<keyword id="KW-0479">Metal-binding</keyword>
<keyword id="KW-0539">Nucleus</keyword>
<keyword id="KW-0675">Receptor</keyword>
<keyword id="KW-1185">Reference proteome</keyword>
<keyword id="KW-0804">Transcription</keyword>
<keyword id="KW-0805">Transcription regulation</keyword>
<keyword id="KW-0862">Zinc</keyword>
<keyword id="KW-0863">Zinc-finger</keyword>
<reference key="1">
    <citation type="journal article" date="2004" name="Genome Res.">
        <title>The status, quality, and expansion of the NIH full-length cDNA project: the Mammalian Gene Collection (MGC).</title>
        <authorList>
            <consortium name="The MGC Project Team"/>
        </authorList>
    </citation>
    <scope>NUCLEOTIDE SEQUENCE [LARGE SCALE MRNA]</scope>
    <source>
        <tissue>Brain</tissue>
    </source>
</reference>
<reference key="2">
    <citation type="journal article" date="1992" name="Genes Dev.">
        <title>Characterization of three RXR genes that mediate the action of 9-cis retinoic acid.</title>
        <authorList>
            <person name="Mangelsdorf D.J."/>
            <person name="Borgmeyer U."/>
            <person name="Heyman R.A."/>
            <person name="Zhou J.Y."/>
            <person name="Ong E.S."/>
            <person name="Oro A.E."/>
            <person name="Kakizuka A."/>
            <person name="Evans R.M."/>
        </authorList>
    </citation>
    <scope>TISSUE SPECIFICITY</scope>
</reference>
<reference key="3">
    <citation type="journal article" date="2017" name="J. Steroid Biochem. Mol. Biol.">
        <title>Fundamental studies of adrenal retinoid-X-receptor: Protein isoform, tissue expression, subcellular distribution, and ligand availability.</title>
        <authorList>
            <person name="Cheng B."/>
            <person name="Al-Shammari F.H."/>
            <person name="Ghader I.A."/>
            <person name="Sequeira F."/>
            <person name="Thakkar J."/>
            <person name="Mathew T.C."/>
        </authorList>
    </citation>
    <scope>TISSUE SPECIFICITY</scope>
</reference>
<dbReference type="EMBL" id="BC091363">
    <property type="protein sequence ID" value="AAH91363.1"/>
    <property type="molecule type" value="mRNA"/>
</dbReference>
<dbReference type="RefSeq" id="NP_113953.1">
    <property type="nucleotide sequence ID" value="NM_031765.1"/>
</dbReference>
<dbReference type="SMR" id="Q5BJR8"/>
<dbReference type="CORUM" id="Q5BJR8"/>
<dbReference type="FunCoup" id="Q5BJR8">
    <property type="interactions" value="507"/>
</dbReference>
<dbReference type="STRING" id="10116.ENSRNOP00000070882"/>
<dbReference type="BindingDB" id="Q5BJR8"/>
<dbReference type="ChEMBL" id="CHEMBL4277"/>
<dbReference type="PhosphoSitePlus" id="Q5BJR8"/>
<dbReference type="PaxDb" id="10116-ENSRNOP00000006117"/>
<dbReference type="GeneID" id="83574"/>
<dbReference type="KEGG" id="rno:83574"/>
<dbReference type="UCSC" id="RGD:620046">
    <property type="organism name" value="rat"/>
</dbReference>
<dbReference type="AGR" id="RGD:620046"/>
<dbReference type="CTD" id="6258"/>
<dbReference type="RGD" id="620046">
    <property type="gene designation" value="Rxrg"/>
</dbReference>
<dbReference type="VEuPathDB" id="HostDB:ENSRNOG00000004537"/>
<dbReference type="eggNOG" id="KOG3575">
    <property type="taxonomic scope" value="Eukaryota"/>
</dbReference>
<dbReference type="HOGENOM" id="CLU_007368_5_4_1"/>
<dbReference type="InParanoid" id="Q5BJR8"/>
<dbReference type="PhylomeDB" id="Q5BJR8"/>
<dbReference type="TreeFam" id="TF352097"/>
<dbReference type="Reactome" id="R-RNO-383280">
    <property type="pathway name" value="Nuclear Receptor transcription pathway"/>
</dbReference>
<dbReference type="Reactome" id="R-RNO-5362517">
    <property type="pathway name" value="Signaling by Retinoic Acid"/>
</dbReference>
<dbReference type="PRO" id="PR:Q5BJR8"/>
<dbReference type="Proteomes" id="UP000002494">
    <property type="component" value="Chromosome 13"/>
</dbReference>
<dbReference type="Bgee" id="ENSRNOG00000004537">
    <property type="expression patterns" value="Expressed in skeletal muscle tissue and 19 other cell types or tissues"/>
</dbReference>
<dbReference type="ExpressionAtlas" id="Q5BJR8">
    <property type="expression patterns" value="baseline and differential"/>
</dbReference>
<dbReference type="GO" id="GO:0005737">
    <property type="term" value="C:cytoplasm"/>
    <property type="evidence" value="ECO:0007669"/>
    <property type="project" value="UniProtKB-SubCell"/>
</dbReference>
<dbReference type="GO" id="GO:0090575">
    <property type="term" value="C:RNA polymerase II transcription regulator complex"/>
    <property type="evidence" value="ECO:0000318"/>
    <property type="project" value="GO_Central"/>
</dbReference>
<dbReference type="GO" id="GO:0140693">
    <property type="term" value="F:molecular condensate scaffold activity"/>
    <property type="evidence" value="ECO:0000266"/>
    <property type="project" value="RGD"/>
</dbReference>
<dbReference type="GO" id="GO:0004879">
    <property type="term" value="F:nuclear receptor activity"/>
    <property type="evidence" value="ECO:0000266"/>
    <property type="project" value="RGD"/>
</dbReference>
<dbReference type="GO" id="GO:0003707">
    <property type="term" value="F:nuclear steroid receptor activity"/>
    <property type="evidence" value="ECO:0007669"/>
    <property type="project" value="InterPro"/>
</dbReference>
<dbReference type="GO" id="GO:0044323">
    <property type="term" value="F:retinoic acid-responsive element binding"/>
    <property type="evidence" value="ECO:0000318"/>
    <property type="project" value="GO_Central"/>
</dbReference>
<dbReference type="GO" id="GO:0043565">
    <property type="term" value="F:sequence-specific DNA binding"/>
    <property type="evidence" value="ECO:0000266"/>
    <property type="project" value="RGD"/>
</dbReference>
<dbReference type="GO" id="GO:1990837">
    <property type="term" value="F:sequence-specific double-stranded DNA binding"/>
    <property type="evidence" value="ECO:0000266"/>
    <property type="project" value="RGD"/>
</dbReference>
<dbReference type="GO" id="GO:0008270">
    <property type="term" value="F:zinc ion binding"/>
    <property type="evidence" value="ECO:0007669"/>
    <property type="project" value="UniProtKB-KW"/>
</dbReference>
<dbReference type="GO" id="GO:0030154">
    <property type="term" value="P:cell differentiation"/>
    <property type="evidence" value="ECO:0000318"/>
    <property type="project" value="GO_Central"/>
</dbReference>
<dbReference type="GO" id="GO:0032870">
    <property type="term" value="P:cellular response to hormone stimulus"/>
    <property type="evidence" value="ECO:0000270"/>
    <property type="project" value="RGD"/>
</dbReference>
<dbReference type="GO" id="GO:0007507">
    <property type="term" value="P:heart development"/>
    <property type="evidence" value="ECO:0000270"/>
    <property type="project" value="RGD"/>
</dbReference>
<dbReference type="GO" id="GO:0007399">
    <property type="term" value="P:nervous system development"/>
    <property type="evidence" value="ECO:0000318"/>
    <property type="project" value="GO_Central"/>
</dbReference>
<dbReference type="GO" id="GO:0030182">
    <property type="term" value="P:neuron differentiation"/>
    <property type="evidence" value="ECO:0000270"/>
    <property type="project" value="RGD"/>
</dbReference>
<dbReference type="GO" id="GO:0007422">
    <property type="term" value="P:peripheral nervous system development"/>
    <property type="evidence" value="ECO:0000270"/>
    <property type="project" value="RGD"/>
</dbReference>
<dbReference type="GO" id="GO:0045944">
    <property type="term" value="P:positive regulation of transcription by RNA polymerase II"/>
    <property type="evidence" value="ECO:0000266"/>
    <property type="project" value="RGD"/>
</dbReference>
<dbReference type="GO" id="GO:0031641">
    <property type="term" value="P:regulation of myelination"/>
    <property type="evidence" value="ECO:0000314"/>
    <property type="project" value="RGD"/>
</dbReference>
<dbReference type="GO" id="GO:0032526">
    <property type="term" value="P:response to retinoic acid"/>
    <property type="evidence" value="ECO:0000270"/>
    <property type="project" value="RGD"/>
</dbReference>
<dbReference type="GO" id="GO:0048384">
    <property type="term" value="P:retinoic acid receptor signaling pathway"/>
    <property type="evidence" value="ECO:0000266"/>
    <property type="project" value="RGD"/>
</dbReference>
<dbReference type="GO" id="GO:0007519">
    <property type="term" value="P:skeletal muscle tissue development"/>
    <property type="evidence" value="ECO:0000270"/>
    <property type="project" value="RGD"/>
</dbReference>
<dbReference type="CDD" id="cd06956">
    <property type="entry name" value="NR_DBD_RXR"/>
    <property type="match status" value="1"/>
</dbReference>
<dbReference type="CDD" id="cd06943">
    <property type="entry name" value="NR_LBD_RXR_like"/>
    <property type="match status" value="1"/>
</dbReference>
<dbReference type="FunFam" id="1.10.565.10:FF:000002">
    <property type="entry name" value="Retinoic acid receptor RXR-alpha"/>
    <property type="match status" value="1"/>
</dbReference>
<dbReference type="FunFam" id="3.30.50.10:FF:000005">
    <property type="entry name" value="Retinoic acid receptor RXR-alpha"/>
    <property type="match status" value="1"/>
</dbReference>
<dbReference type="Gene3D" id="3.30.50.10">
    <property type="entry name" value="Erythroid Transcription Factor GATA-1, subunit A"/>
    <property type="match status" value="1"/>
</dbReference>
<dbReference type="Gene3D" id="1.10.565.10">
    <property type="entry name" value="Retinoid X Receptor"/>
    <property type="match status" value="1"/>
</dbReference>
<dbReference type="InterPro" id="IPR035500">
    <property type="entry name" value="NHR-like_dom_sf"/>
</dbReference>
<dbReference type="InterPro" id="IPR021780">
    <property type="entry name" value="Nuc_recep-AF1"/>
</dbReference>
<dbReference type="InterPro" id="IPR000536">
    <property type="entry name" value="Nucl_hrmn_rcpt_lig-bd"/>
</dbReference>
<dbReference type="InterPro" id="IPR050274">
    <property type="entry name" value="Nuclear_hormone_rcpt_NR2"/>
</dbReference>
<dbReference type="InterPro" id="IPR001723">
    <property type="entry name" value="Nuclear_hrmn_rcpt"/>
</dbReference>
<dbReference type="InterPro" id="IPR000003">
    <property type="entry name" value="Retinoid-X_rcpt/HNF4"/>
</dbReference>
<dbReference type="InterPro" id="IPR001628">
    <property type="entry name" value="Znf_hrmn_rcpt"/>
</dbReference>
<dbReference type="InterPro" id="IPR013088">
    <property type="entry name" value="Znf_NHR/GATA"/>
</dbReference>
<dbReference type="PANTHER" id="PTHR24083">
    <property type="entry name" value="NUCLEAR HORMONE RECEPTOR"/>
    <property type="match status" value="1"/>
</dbReference>
<dbReference type="Pfam" id="PF00104">
    <property type="entry name" value="Hormone_recep"/>
    <property type="match status" value="1"/>
</dbReference>
<dbReference type="Pfam" id="PF11825">
    <property type="entry name" value="Nuc_recep-AF1"/>
    <property type="match status" value="1"/>
</dbReference>
<dbReference type="Pfam" id="PF00105">
    <property type="entry name" value="zf-C4"/>
    <property type="match status" value="1"/>
</dbReference>
<dbReference type="PRINTS" id="PR00545">
    <property type="entry name" value="RETINOIDXR"/>
</dbReference>
<dbReference type="PRINTS" id="PR00398">
    <property type="entry name" value="STRDHORMONER"/>
</dbReference>
<dbReference type="PRINTS" id="PR00047">
    <property type="entry name" value="STROIDFINGER"/>
</dbReference>
<dbReference type="SMART" id="SM00430">
    <property type="entry name" value="HOLI"/>
    <property type="match status" value="1"/>
</dbReference>
<dbReference type="SMART" id="SM00399">
    <property type="entry name" value="ZnF_C4"/>
    <property type="match status" value="1"/>
</dbReference>
<dbReference type="SUPFAM" id="SSF57716">
    <property type="entry name" value="Glucocorticoid receptor-like (DNA-binding domain)"/>
    <property type="match status" value="1"/>
</dbReference>
<dbReference type="SUPFAM" id="SSF48508">
    <property type="entry name" value="Nuclear receptor ligand-binding domain"/>
    <property type="match status" value="1"/>
</dbReference>
<dbReference type="PROSITE" id="PS51843">
    <property type="entry name" value="NR_LBD"/>
    <property type="match status" value="1"/>
</dbReference>
<dbReference type="PROSITE" id="PS00031">
    <property type="entry name" value="NUCLEAR_REC_DBD_1"/>
    <property type="match status" value="1"/>
</dbReference>
<dbReference type="PROSITE" id="PS51030">
    <property type="entry name" value="NUCLEAR_REC_DBD_2"/>
    <property type="match status" value="1"/>
</dbReference>
<proteinExistence type="evidence at protein level"/>
<comment type="function">
    <text evidence="1">Receptor for retinoic acid. Retinoic acid receptors bind as heterodimers to their target response elements in response to their ligands, all-trans or 9-cis retinoic acid, and regulate gene expression in various biological processes. The RAR/RXR heterodimers bind to the retinoic acid response elements (RARE) composed of tandem 5'-AGGTCA-3' sites known as DR1-DR5. The high affinity ligand for RXRs is 9-cis retinoic acid (By similarity).</text>
</comment>
<comment type="subunit">
    <text evidence="2 3">Homodimer (By similarity). Heterodimer with a RAR molecule (By similarity). Binds DNA preferentially as a RAR/RXR heterodimer (By similarity). Interacts with RARA (By similarity).</text>
</comment>
<comment type="subcellular location">
    <subcellularLocation>
        <location evidence="3 4">Nucleus</location>
    </subcellularLocation>
    <subcellularLocation>
        <location evidence="3">Cytoplasm</location>
    </subcellularLocation>
</comment>
<comment type="tissue specificity">
    <text evidence="7 8">Expressed in the liver, but not detected in the adrenal gland (at protein level) (PubMed:28267642). Restricted expression in adrenal gland, kidney, liver, brain and lungs (PubMed:1312497). Strong expression in heart and muscles (PubMed:1312497).</text>
</comment>
<comment type="domain">
    <text>Composed of three domains: a modulating N-terminal domain, a DNA-binding domain and a C-terminal ligand-binding domain.</text>
</comment>
<comment type="PTM">
    <text evidence="3">Acetylated by EP300.</text>
</comment>
<comment type="similarity">
    <text evidence="9">Belongs to the nuclear hormone receptor family. NR2 subfamily.</text>
</comment>
<gene>
    <name type="primary">Rxrg</name>
    <name type="synonym">Nr2b3</name>
</gene>
<name>RXRG_RAT</name>
<protein>
    <recommendedName>
        <fullName>Retinoic acid receptor RXR-gamma</fullName>
    </recommendedName>
    <alternativeName>
        <fullName>Nuclear receptor subfamily 2 group B member 3</fullName>
    </alternativeName>
    <alternativeName>
        <fullName>Retinoid X receptor gamma</fullName>
    </alternativeName>
</protein>
<feature type="chain" id="PRO_0000317032" description="Retinoic acid receptor RXR-gamma">
    <location>
        <begin position="1"/>
        <end position="463"/>
    </location>
</feature>
<feature type="domain" description="NR LBD" evidence="5">
    <location>
        <begin position="231"/>
        <end position="459"/>
    </location>
</feature>
<feature type="DNA-binding region" description="Nuclear receptor" evidence="4">
    <location>
        <begin position="139"/>
        <end position="204"/>
    </location>
</feature>
<feature type="zinc finger region" description="NR C4-type" evidence="4">
    <location>
        <begin position="139"/>
        <end position="159"/>
    </location>
</feature>
<feature type="zinc finger region" description="NR C4-type" evidence="4">
    <location>
        <begin position="175"/>
        <end position="199"/>
    </location>
</feature>
<feature type="region of interest" description="Modulating" evidence="1">
    <location>
        <begin position="1"/>
        <end position="138"/>
    </location>
</feature>
<feature type="region of interest" description="Disordered" evidence="6">
    <location>
        <begin position="16"/>
        <end position="53"/>
    </location>
</feature>
<feature type="region of interest" description="Hinge">
    <location>
        <begin position="205"/>
        <end position="230"/>
    </location>
</feature>
<sequence length="463" mass="50893">MYGNYSHFMKFPTGFGGSPGHTGSTSMSPSVALPTGKPMDSHPSYTDTPVSAPRTLSAVGTPLNALGSPYRVITSAMGPPSGALAAPPGINLVVPPSSQLNVVNSVSSSEDIKPLPGLPGIGNMNYPSTSPGSLVKHICAICGDRSSGKHYGVYSCEGCKGFFKRTIRKDLIYTCRDNKDCLIDKRQRNRCQYCRYQKCLVMGMKREAVQEERQRSRERAESEAECASTGHEDMPVERILEAELAVEPKTESYGDMSVESSTNDPVTNICHAADKQLFTLVEWAKRIPHFSDLTLEDQVILLRAGWNELLIASFSHRSVSVQDGILLATGLHVHRSSAHSAGVGSIFDRVLTELVSKMKDMRMDKSELGCLRAIVLFNPDAKGLSNPSEVETLREKVYATLEAYTKQKYPEQPGRFAKLLLRLPALRSIGLKCLEHLFFFKLIGDTPIDTFLMEMLETPLQIT</sequence>